<dbReference type="EC" id="1.2.1.72" evidence="1"/>
<dbReference type="EMBL" id="CP000931">
    <property type="protein sequence ID" value="ABZ75420.1"/>
    <property type="molecule type" value="Genomic_DNA"/>
</dbReference>
<dbReference type="RefSeq" id="WP_012275972.1">
    <property type="nucleotide sequence ID" value="NC_010334.1"/>
</dbReference>
<dbReference type="SMR" id="B0TUC0"/>
<dbReference type="STRING" id="458817.Shal_0845"/>
<dbReference type="KEGG" id="shl:Shal_0845"/>
<dbReference type="eggNOG" id="COG0057">
    <property type="taxonomic scope" value="Bacteria"/>
</dbReference>
<dbReference type="HOGENOM" id="CLU_030140_0_0_6"/>
<dbReference type="OrthoDB" id="9803304at2"/>
<dbReference type="UniPathway" id="UPA00244">
    <property type="reaction ID" value="UER00309"/>
</dbReference>
<dbReference type="Proteomes" id="UP000001317">
    <property type="component" value="Chromosome"/>
</dbReference>
<dbReference type="GO" id="GO:0005737">
    <property type="term" value="C:cytoplasm"/>
    <property type="evidence" value="ECO:0007669"/>
    <property type="project" value="UniProtKB-SubCell"/>
</dbReference>
<dbReference type="GO" id="GO:0048001">
    <property type="term" value="F:erythrose-4-phosphate dehydrogenase activity"/>
    <property type="evidence" value="ECO:0007669"/>
    <property type="project" value="UniProtKB-UniRule"/>
</dbReference>
<dbReference type="GO" id="GO:0051287">
    <property type="term" value="F:NAD binding"/>
    <property type="evidence" value="ECO:0007669"/>
    <property type="project" value="InterPro"/>
</dbReference>
<dbReference type="GO" id="GO:0050661">
    <property type="term" value="F:NADP binding"/>
    <property type="evidence" value="ECO:0007669"/>
    <property type="project" value="InterPro"/>
</dbReference>
<dbReference type="GO" id="GO:0006006">
    <property type="term" value="P:glucose metabolic process"/>
    <property type="evidence" value="ECO:0007669"/>
    <property type="project" value="InterPro"/>
</dbReference>
<dbReference type="GO" id="GO:0042823">
    <property type="term" value="P:pyridoxal phosphate biosynthetic process"/>
    <property type="evidence" value="ECO:0007669"/>
    <property type="project" value="UniProtKB-UniRule"/>
</dbReference>
<dbReference type="GO" id="GO:0008615">
    <property type="term" value="P:pyridoxine biosynthetic process"/>
    <property type="evidence" value="ECO:0007669"/>
    <property type="project" value="UniProtKB-UniRule"/>
</dbReference>
<dbReference type="CDD" id="cd23937">
    <property type="entry name" value="GAPDH_C_E4PDH"/>
    <property type="match status" value="1"/>
</dbReference>
<dbReference type="CDD" id="cd17892">
    <property type="entry name" value="GAPDH_N_E4PDH"/>
    <property type="match status" value="1"/>
</dbReference>
<dbReference type="FunFam" id="3.30.360.10:FF:000007">
    <property type="entry name" value="D-erythrose-4-phosphate dehydrogenase"/>
    <property type="match status" value="1"/>
</dbReference>
<dbReference type="FunFam" id="3.40.50.720:FF:000001">
    <property type="entry name" value="Glyceraldehyde-3-phosphate dehydrogenase"/>
    <property type="match status" value="1"/>
</dbReference>
<dbReference type="Gene3D" id="3.30.360.10">
    <property type="entry name" value="Dihydrodipicolinate Reductase, domain 2"/>
    <property type="match status" value="1"/>
</dbReference>
<dbReference type="Gene3D" id="3.40.50.720">
    <property type="entry name" value="NAD(P)-binding Rossmann-like Domain"/>
    <property type="match status" value="1"/>
</dbReference>
<dbReference type="HAMAP" id="MF_01640">
    <property type="entry name" value="E4P_dehydrog"/>
    <property type="match status" value="1"/>
</dbReference>
<dbReference type="InterPro" id="IPR006422">
    <property type="entry name" value="E4P_DH_bac"/>
</dbReference>
<dbReference type="InterPro" id="IPR020831">
    <property type="entry name" value="GlycerAld/Erythrose_P_DH"/>
</dbReference>
<dbReference type="InterPro" id="IPR020830">
    <property type="entry name" value="GlycerAld_3-P_DH_AS"/>
</dbReference>
<dbReference type="InterPro" id="IPR020829">
    <property type="entry name" value="GlycerAld_3-P_DH_cat"/>
</dbReference>
<dbReference type="InterPro" id="IPR020828">
    <property type="entry name" value="GlycerAld_3-P_DH_NAD(P)-bd"/>
</dbReference>
<dbReference type="InterPro" id="IPR006424">
    <property type="entry name" value="Glyceraldehyde-3-P_DH_1"/>
</dbReference>
<dbReference type="InterPro" id="IPR036291">
    <property type="entry name" value="NAD(P)-bd_dom_sf"/>
</dbReference>
<dbReference type="NCBIfam" id="TIGR01532">
    <property type="entry name" value="E4PD_g-proteo"/>
    <property type="match status" value="1"/>
</dbReference>
<dbReference type="NCBIfam" id="TIGR01534">
    <property type="entry name" value="GAPDH-I"/>
    <property type="match status" value="1"/>
</dbReference>
<dbReference type="NCBIfam" id="NF010058">
    <property type="entry name" value="PRK13535.1"/>
    <property type="match status" value="1"/>
</dbReference>
<dbReference type="PANTHER" id="PTHR43148">
    <property type="entry name" value="GLYCERALDEHYDE-3-PHOSPHATE DEHYDROGENASE 2"/>
    <property type="match status" value="1"/>
</dbReference>
<dbReference type="Pfam" id="PF02800">
    <property type="entry name" value="Gp_dh_C"/>
    <property type="match status" value="1"/>
</dbReference>
<dbReference type="Pfam" id="PF00044">
    <property type="entry name" value="Gp_dh_N"/>
    <property type="match status" value="1"/>
</dbReference>
<dbReference type="PIRSF" id="PIRSF000149">
    <property type="entry name" value="GAP_DH"/>
    <property type="match status" value="1"/>
</dbReference>
<dbReference type="PRINTS" id="PR00078">
    <property type="entry name" value="G3PDHDRGNASE"/>
</dbReference>
<dbReference type="SMART" id="SM00846">
    <property type="entry name" value="Gp_dh_N"/>
    <property type="match status" value="1"/>
</dbReference>
<dbReference type="SUPFAM" id="SSF55347">
    <property type="entry name" value="Glyceraldehyde-3-phosphate dehydrogenase-like, C-terminal domain"/>
    <property type="match status" value="1"/>
</dbReference>
<dbReference type="SUPFAM" id="SSF51735">
    <property type="entry name" value="NAD(P)-binding Rossmann-fold domains"/>
    <property type="match status" value="1"/>
</dbReference>
<dbReference type="PROSITE" id="PS00071">
    <property type="entry name" value="GAPDH"/>
    <property type="match status" value="1"/>
</dbReference>
<evidence type="ECO:0000255" key="1">
    <source>
        <dbReference type="HAMAP-Rule" id="MF_01640"/>
    </source>
</evidence>
<feature type="chain" id="PRO_1000088209" description="D-erythrose-4-phosphate dehydrogenase">
    <location>
        <begin position="1"/>
        <end position="339"/>
    </location>
</feature>
<feature type="active site" description="Nucleophile" evidence="1">
    <location>
        <position position="154"/>
    </location>
</feature>
<feature type="binding site" evidence="1">
    <location>
        <begin position="11"/>
        <end position="12"/>
    </location>
    <ligand>
        <name>NAD(+)</name>
        <dbReference type="ChEBI" id="CHEBI:57540"/>
    </ligand>
</feature>
<feature type="binding site" evidence="1">
    <location>
        <begin position="153"/>
        <end position="155"/>
    </location>
    <ligand>
        <name>substrate</name>
    </ligand>
</feature>
<feature type="binding site" evidence="1">
    <location>
        <position position="199"/>
    </location>
    <ligand>
        <name>substrate</name>
    </ligand>
</feature>
<feature type="binding site" evidence="1">
    <location>
        <begin position="212"/>
        <end position="213"/>
    </location>
    <ligand>
        <name>substrate</name>
    </ligand>
</feature>
<feature type="binding site" evidence="1">
    <location>
        <position position="235"/>
    </location>
    <ligand>
        <name>substrate</name>
    </ligand>
</feature>
<feature type="binding site" evidence="1">
    <location>
        <position position="317"/>
    </location>
    <ligand>
        <name>NAD(+)</name>
        <dbReference type="ChEBI" id="CHEBI:57540"/>
    </ligand>
</feature>
<feature type="site" description="Activates thiol group during catalysis" evidence="1">
    <location>
        <position position="181"/>
    </location>
</feature>
<gene>
    <name evidence="1" type="primary">epd</name>
    <name type="ordered locus">Shal_0845</name>
</gene>
<reference key="1">
    <citation type="submission" date="2008-01" db="EMBL/GenBank/DDBJ databases">
        <title>Complete sequence of Shewanella halifaxensis HAW-EB4.</title>
        <authorList>
            <consortium name="US DOE Joint Genome Institute"/>
            <person name="Copeland A."/>
            <person name="Lucas S."/>
            <person name="Lapidus A."/>
            <person name="Glavina del Rio T."/>
            <person name="Dalin E."/>
            <person name="Tice H."/>
            <person name="Bruce D."/>
            <person name="Goodwin L."/>
            <person name="Pitluck S."/>
            <person name="Sims D."/>
            <person name="Brettin T."/>
            <person name="Detter J.C."/>
            <person name="Han C."/>
            <person name="Kuske C.R."/>
            <person name="Schmutz J."/>
            <person name="Larimer F."/>
            <person name="Land M."/>
            <person name="Hauser L."/>
            <person name="Kyrpides N."/>
            <person name="Kim E."/>
            <person name="Zhao J.-S."/>
            <person name="Richardson P."/>
        </authorList>
    </citation>
    <scope>NUCLEOTIDE SEQUENCE [LARGE SCALE GENOMIC DNA]</scope>
    <source>
        <strain>HAW-EB4</strain>
    </source>
</reference>
<name>E4PD_SHEHH</name>
<accession>B0TUC0</accession>
<comment type="function">
    <text evidence="1">Catalyzes the NAD-dependent conversion of D-erythrose 4-phosphate to 4-phosphoerythronate.</text>
</comment>
<comment type="catalytic activity">
    <reaction evidence="1">
        <text>D-erythrose 4-phosphate + NAD(+) + H2O = 4-phospho-D-erythronate + NADH + 2 H(+)</text>
        <dbReference type="Rhea" id="RHEA:12056"/>
        <dbReference type="ChEBI" id="CHEBI:15377"/>
        <dbReference type="ChEBI" id="CHEBI:15378"/>
        <dbReference type="ChEBI" id="CHEBI:16897"/>
        <dbReference type="ChEBI" id="CHEBI:57540"/>
        <dbReference type="ChEBI" id="CHEBI:57945"/>
        <dbReference type="ChEBI" id="CHEBI:58766"/>
        <dbReference type="EC" id="1.2.1.72"/>
    </reaction>
</comment>
<comment type="pathway">
    <text evidence="1">Cofactor biosynthesis; pyridoxine 5'-phosphate biosynthesis; pyridoxine 5'-phosphate from D-erythrose 4-phosphate: step 1/5.</text>
</comment>
<comment type="subunit">
    <text evidence="1">Homotetramer.</text>
</comment>
<comment type="subcellular location">
    <subcellularLocation>
        <location evidence="1">Cytoplasm</location>
    </subcellularLocation>
</comment>
<comment type="similarity">
    <text evidence="1">Belongs to the glyceraldehyde-3-phosphate dehydrogenase family. Epd subfamily.</text>
</comment>
<sequence>MIRVAINGYGRIGRSILRALYESAKRDRIQIVAINELAKPEAMLHLTQYDTTHGRFHTQVKLDNQHMIIGDDAIKLLHEPNPANLPWKELDIDIVYEATGVINDRQECEAHLKAGAKQVLISHPSSNDVDATIVYGVNQDLLRAEHTVVSNASCTTNCIVPVIDVLDRHFEVKSGAITTIHSAMNDQQVIDAYHDDLRRTRAAGQSIIPVDTKLARGIERILPHMKNKFEAISVRVPTINVTAIDLSVTLNKRVDIELVNRVLKQATEGSFSGVVGFTNEPLVSCDFNHDPRSSIVDGTQTRVSDGHLVKLLLWCDNEWGFANRMLDTSLEMIKAKRSS</sequence>
<protein>
    <recommendedName>
        <fullName evidence="1">D-erythrose-4-phosphate dehydrogenase</fullName>
        <shortName evidence="1">E4PDH</shortName>
        <ecNumber evidence="1">1.2.1.72</ecNumber>
    </recommendedName>
</protein>
<organism>
    <name type="scientific">Shewanella halifaxensis (strain HAW-EB4)</name>
    <dbReference type="NCBI Taxonomy" id="458817"/>
    <lineage>
        <taxon>Bacteria</taxon>
        <taxon>Pseudomonadati</taxon>
        <taxon>Pseudomonadota</taxon>
        <taxon>Gammaproteobacteria</taxon>
        <taxon>Alteromonadales</taxon>
        <taxon>Shewanellaceae</taxon>
        <taxon>Shewanella</taxon>
    </lineage>
</organism>
<keyword id="KW-0963">Cytoplasm</keyword>
<keyword id="KW-0520">NAD</keyword>
<keyword id="KW-0560">Oxidoreductase</keyword>
<keyword id="KW-0664">Pyridoxine biosynthesis</keyword>
<proteinExistence type="inferred from homology"/>